<reference key="1">
    <citation type="journal article" date="2005" name="Science">
        <title>Genome streamlining in a cosmopolitan oceanic bacterium.</title>
        <authorList>
            <person name="Giovannoni S.J."/>
            <person name="Tripp H.J."/>
            <person name="Givan S."/>
            <person name="Podar M."/>
            <person name="Vergin K.L."/>
            <person name="Baptista D."/>
            <person name="Bibbs L."/>
            <person name="Eads J."/>
            <person name="Richardson T.H."/>
            <person name="Noordewier M."/>
            <person name="Rappe M.S."/>
            <person name="Short J.M."/>
            <person name="Carrington J.C."/>
            <person name="Mathur E.J."/>
        </authorList>
    </citation>
    <scope>NUCLEOTIDE SEQUENCE [LARGE SCALE GENOMIC DNA]</scope>
    <source>
        <strain>HTCC1062</strain>
    </source>
</reference>
<keyword id="KW-0067">ATP-binding</keyword>
<keyword id="KW-0436">Ligase</keyword>
<keyword id="KW-0547">Nucleotide-binding</keyword>
<keyword id="KW-0554">One-carbon metabolism</keyword>
<keyword id="KW-1185">Reference proteome</keyword>
<gene>
    <name evidence="1" type="primary">fhs</name>
    <name type="ordered locus">SAR11_1285</name>
</gene>
<sequence length="561" mass="61012">MSEVKSDIQIAREAKMQPINDILAKINVPDESSAFSPMGRHIAKINLEYLDTLKDKPNGKLVLVTAITPTPAGEGKTTTSVGLNDGLNKIGKKSIVCLREPSLGPSFGMKGGAAGGGYAQVVPMEQINLHFTGDFHAITSAHNLLSALIDNHIYWGNKLDIDVRRIVWKRVMDMNDRSLRSININLGGVANGFPREDGFDITVASEIMAIFCLSNDLEDLEKRIGNITIAYTRDKKPVYAKDLKAQGPMTVLLKDAIRPNVTQTLENNPAIIHGGPFANIAHGCNSVIATKTGLKLADYVVTEAGFGADLGAEKFLDIKCRKSDLKPSCVVIVATIRALKMHGGVAKDDLKTENVEALKKGLVNLQRHVENVKKFGLPVAVAVNHFIKDTENEVKALIEFCDTIGVKASLCTHWANGGEGTKELASHVAELCEKNEDKFKFLYESKTPLFKKIETIAKEIYRADEVIADTKIRDQLKSFEDAGYGDFPICIAKTQYSFSTDPSLKGAPTGHSLPIREIKLSSGAEFIVVICGAVMTMPGLPRVPAADSIKLNKDGEIEGLF</sequence>
<proteinExistence type="inferred from homology"/>
<comment type="catalytic activity">
    <reaction evidence="1">
        <text>(6S)-5,6,7,8-tetrahydrofolate + formate + ATP = (6R)-10-formyltetrahydrofolate + ADP + phosphate</text>
        <dbReference type="Rhea" id="RHEA:20221"/>
        <dbReference type="ChEBI" id="CHEBI:15740"/>
        <dbReference type="ChEBI" id="CHEBI:30616"/>
        <dbReference type="ChEBI" id="CHEBI:43474"/>
        <dbReference type="ChEBI" id="CHEBI:57453"/>
        <dbReference type="ChEBI" id="CHEBI:195366"/>
        <dbReference type="ChEBI" id="CHEBI:456216"/>
        <dbReference type="EC" id="6.3.4.3"/>
    </reaction>
</comment>
<comment type="pathway">
    <text evidence="1">One-carbon metabolism; tetrahydrofolate interconversion.</text>
</comment>
<comment type="similarity">
    <text evidence="1">Belongs to the formate--tetrahydrofolate ligase family.</text>
</comment>
<dbReference type="EC" id="6.3.4.3" evidence="1"/>
<dbReference type="EMBL" id="CP000084">
    <property type="protein sequence ID" value="AAZ22089.1"/>
    <property type="molecule type" value="Genomic_DNA"/>
</dbReference>
<dbReference type="RefSeq" id="WP_011282279.1">
    <property type="nucleotide sequence ID" value="NC_007205.1"/>
</dbReference>
<dbReference type="SMR" id="Q4FL49"/>
<dbReference type="STRING" id="335992.SAR11_1285"/>
<dbReference type="GeneID" id="66295776"/>
<dbReference type="KEGG" id="pub:SAR11_1285"/>
<dbReference type="eggNOG" id="COG2759">
    <property type="taxonomic scope" value="Bacteria"/>
</dbReference>
<dbReference type="HOGENOM" id="CLU_003601_3_3_5"/>
<dbReference type="OrthoDB" id="9761733at2"/>
<dbReference type="UniPathway" id="UPA00193"/>
<dbReference type="Proteomes" id="UP000002528">
    <property type="component" value="Chromosome"/>
</dbReference>
<dbReference type="GO" id="GO:0005524">
    <property type="term" value="F:ATP binding"/>
    <property type="evidence" value="ECO:0007669"/>
    <property type="project" value="UniProtKB-UniRule"/>
</dbReference>
<dbReference type="GO" id="GO:0004329">
    <property type="term" value="F:formate-tetrahydrofolate ligase activity"/>
    <property type="evidence" value="ECO:0007669"/>
    <property type="project" value="UniProtKB-UniRule"/>
</dbReference>
<dbReference type="GO" id="GO:0035999">
    <property type="term" value="P:tetrahydrofolate interconversion"/>
    <property type="evidence" value="ECO:0007669"/>
    <property type="project" value="UniProtKB-UniRule"/>
</dbReference>
<dbReference type="CDD" id="cd00477">
    <property type="entry name" value="FTHFS"/>
    <property type="match status" value="1"/>
</dbReference>
<dbReference type="FunFam" id="3.30.1510.10:FF:000001">
    <property type="entry name" value="Formate--tetrahydrofolate ligase"/>
    <property type="match status" value="1"/>
</dbReference>
<dbReference type="FunFam" id="3.10.410.10:FF:000001">
    <property type="entry name" value="Putative formate--tetrahydrofolate ligase"/>
    <property type="match status" value="1"/>
</dbReference>
<dbReference type="Gene3D" id="3.30.1510.10">
    <property type="entry name" value="Domain 2, N(10)-formyltetrahydrofolate synthetase"/>
    <property type="match status" value="1"/>
</dbReference>
<dbReference type="Gene3D" id="3.10.410.10">
    <property type="entry name" value="Formyltetrahydrofolate synthetase, domain 3"/>
    <property type="match status" value="1"/>
</dbReference>
<dbReference type="Gene3D" id="3.40.50.300">
    <property type="entry name" value="P-loop containing nucleotide triphosphate hydrolases"/>
    <property type="match status" value="1"/>
</dbReference>
<dbReference type="HAMAP" id="MF_01543">
    <property type="entry name" value="FTHFS"/>
    <property type="match status" value="1"/>
</dbReference>
<dbReference type="InterPro" id="IPR000559">
    <property type="entry name" value="Formate_THF_ligase"/>
</dbReference>
<dbReference type="InterPro" id="IPR020628">
    <property type="entry name" value="Formate_THF_ligase_CS"/>
</dbReference>
<dbReference type="InterPro" id="IPR027417">
    <property type="entry name" value="P-loop_NTPase"/>
</dbReference>
<dbReference type="NCBIfam" id="NF010030">
    <property type="entry name" value="PRK13505.1"/>
    <property type="match status" value="1"/>
</dbReference>
<dbReference type="Pfam" id="PF01268">
    <property type="entry name" value="FTHFS"/>
    <property type="match status" value="1"/>
</dbReference>
<dbReference type="SUPFAM" id="SSF52540">
    <property type="entry name" value="P-loop containing nucleoside triphosphate hydrolases"/>
    <property type="match status" value="1"/>
</dbReference>
<dbReference type="PROSITE" id="PS00721">
    <property type="entry name" value="FTHFS_1"/>
    <property type="match status" value="1"/>
</dbReference>
<dbReference type="PROSITE" id="PS00722">
    <property type="entry name" value="FTHFS_2"/>
    <property type="match status" value="1"/>
</dbReference>
<name>FTHS_PELUB</name>
<organism>
    <name type="scientific">Pelagibacter ubique (strain HTCC1062)</name>
    <dbReference type="NCBI Taxonomy" id="335992"/>
    <lineage>
        <taxon>Bacteria</taxon>
        <taxon>Pseudomonadati</taxon>
        <taxon>Pseudomonadota</taxon>
        <taxon>Alphaproteobacteria</taxon>
        <taxon>Candidatus Pelagibacterales</taxon>
        <taxon>Candidatus Pelagibacteraceae</taxon>
        <taxon>Candidatus Pelagibacter</taxon>
    </lineage>
</organism>
<accession>Q4FL49</accession>
<protein>
    <recommendedName>
        <fullName evidence="1">Formate--tetrahydrofolate ligase</fullName>
        <ecNumber evidence="1">6.3.4.3</ecNumber>
    </recommendedName>
    <alternativeName>
        <fullName evidence="1">Formyltetrahydrofolate synthetase</fullName>
        <shortName evidence="1">FHS</shortName>
        <shortName evidence="1">FTHFS</shortName>
    </alternativeName>
</protein>
<evidence type="ECO:0000255" key="1">
    <source>
        <dbReference type="HAMAP-Rule" id="MF_01543"/>
    </source>
</evidence>
<feature type="chain" id="PRO_0000199366" description="Formate--tetrahydrofolate ligase">
    <location>
        <begin position="1"/>
        <end position="561"/>
    </location>
</feature>
<feature type="binding site" evidence="1">
    <location>
        <begin position="70"/>
        <end position="77"/>
    </location>
    <ligand>
        <name>ATP</name>
        <dbReference type="ChEBI" id="CHEBI:30616"/>
    </ligand>
</feature>